<protein>
    <recommendedName>
        <fullName evidence="5">Mambalgin-3</fullName>
        <shortName evidence="5">Mamb-3</shortName>
    </recommendedName>
</protein>
<name>3SX3_DENAN</name>
<keyword id="KW-0903">Direct protein sequencing</keyword>
<keyword id="KW-1015">Disulfide bond</keyword>
<keyword id="KW-0872">Ion channel impairing toxin</keyword>
<keyword id="KW-0582">Pharmaceutical</keyword>
<keyword id="KW-1275">Proton-gated sodium channel impairing toxin</keyword>
<keyword id="KW-0964">Secreted</keyword>
<keyword id="KW-0800">Toxin</keyword>
<accession>C0HJB0</accession>
<reference key="1">
    <citation type="submission" date="2013-02" db="UniProtKB">
        <authorList>
            <person name="Schweitz H."/>
            <person name="Diochot S."/>
            <person name="Baron A."/>
            <person name="Salinas M."/>
            <person name="Lingueglia E."/>
        </authorList>
    </citation>
    <scope>PROTEIN SEQUENCE</scope>
    <scope>FUNCTION</scope>
    <scope>MASS SPECTROMETRY</scope>
    <scope>SUBCELLULAR LOCATION</scope>
    <source>
        <tissue>Venom</tissue>
    </source>
</reference>
<reference key="2">
    <citation type="journal article" date="2013" name="Toxicon">
        <title>Venom toxins in the exploration of molecular, physiological and pathophysiological functions of acid-sensing ion channels.</title>
        <authorList>
            <person name="Baron A."/>
            <person name="Diochot S."/>
            <person name="Salinas M."/>
            <person name="Deval E."/>
            <person name="Noel J."/>
            <person name="Lingueglia E."/>
        </authorList>
    </citation>
    <scope>FUNCTION</scope>
    <scope>REVIEW</scope>
</reference>
<evidence type="ECO:0000250" key="1">
    <source>
        <dbReference type="UniProtKB" id="B3EWH9"/>
    </source>
</evidence>
<evidence type="ECO:0000250" key="2">
    <source>
        <dbReference type="UniProtKB" id="P0DKR6"/>
    </source>
</evidence>
<evidence type="ECO:0000250" key="3">
    <source>
        <dbReference type="UniProtKB" id="P0DKS3"/>
    </source>
</evidence>
<evidence type="ECO:0000269" key="4">
    <source ref="1"/>
</evidence>
<evidence type="ECO:0000303" key="5">
    <source ref="1"/>
</evidence>
<evidence type="ECO:0000305" key="6"/>
<evidence type="ECO:0000305" key="7">
    <source ref="1"/>
</evidence>
<comment type="function">
    <text evidence="2 3 4">This three-finger toxin inhibits ASIC channels (Ref.1). It acts as a gating modifier toxin by decreasing the apparent proton sensitivity of activation and by slightly increasing the apparent proton sensitivity for inactivation. It binds more tightly to the closed state and to a much lesser extent the inactivated/desensitized state of ASIC1a (By similarity). It interacts directly with the outside surface of the thumb domain of chicken ASIC1a (ASIC1a), but does not insert into the acidic pocket as suggested previously (By similarity). This binding leads to relocation of the thumb domain that could disrupt the acidic pocket of cASIC1a (By similarity). The peptide exerts both stimulatory and inhibitory effects on ASIC1a (By similarity). It reversibly inhibits rASIC1a (IC(50)=17 nM), rASIC1b (IC(50)= 44 nM) and rASIC1a-rASIC2a (IC(50)=252 nM) channels (Ref.1). In vivo, it shows a potent naloxone-resistant analgesic effect against acute and inflammatory pain upon central and peripheral injection. In addition, it also has an opioid-independent effect on both thermal and mechanical inflammatory pain after systemic administration and is effective against neuropathic pain (By similarity).</text>
</comment>
<comment type="subcellular location">
    <subcellularLocation>
        <location evidence="4">Secreted</location>
    </subcellularLocation>
</comment>
<comment type="tissue specificity">
    <text evidence="7">Expressed by the venom gland.</text>
</comment>
<comment type="mass spectrometry" mass="6566.6" error="1.0" method="MALDI" evidence="4"/>
<comment type="pharmaceutical">
    <text evidence="2">Promising peptide that shows a potent analgesic effect against acute and inflammatory pain that can be as strong as morphine but resistant to naloxone, with much less tolerance and no respiratory distress.</text>
</comment>
<comment type="similarity">
    <text evidence="6">Belongs to the three-finger toxin family. Short-chain subfamily. Mambalgin sub-subfamily.</text>
</comment>
<proteinExistence type="evidence at protein level"/>
<feature type="chain" id="PRO_0000422048" description="Mambalgin-3" evidence="4">
    <location>
        <begin position="1"/>
        <end position="57"/>
    </location>
</feature>
<feature type="disulfide bond" evidence="1">
    <location>
        <begin position="3"/>
        <end position="19"/>
    </location>
</feature>
<feature type="disulfide bond" evidence="1">
    <location>
        <begin position="12"/>
        <end position="37"/>
    </location>
</feature>
<feature type="disulfide bond" evidence="1">
    <location>
        <begin position="41"/>
        <end position="49"/>
    </location>
</feature>
<feature type="disulfide bond" evidence="1">
    <location>
        <begin position="50"/>
        <end position="55"/>
    </location>
</feature>
<organism>
    <name type="scientific">Dendroaspis angusticeps</name>
    <name type="common">Eastern green mamba</name>
    <name type="synonym">Naja angusticeps</name>
    <dbReference type="NCBI Taxonomy" id="8618"/>
    <lineage>
        <taxon>Eukaryota</taxon>
        <taxon>Metazoa</taxon>
        <taxon>Chordata</taxon>
        <taxon>Craniata</taxon>
        <taxon>Vertebrata</taxon>
        <taxon>Euteleostomi</taxon>
        <taxon>Lepidosauria</taxon>
        <taxon>Squamata</taxon>
        <taxon>Bifurcata</taxon>
        <taxon>Unidentata</taxon>
        <taxon>Episquamata</taxon>
        <taxon>Toxicofera</taxon>
        <taxon>Serpentes</taxon>
        <taxon>Colubroidea</taxon>
        <taxon>Elapidae</taxon>
        <taxon>Elapinae</taxon>
        <taxon>Dendroaspis</taxon>
    </lineage>
</organism>
<dbReference type="BMRB" id="C0HJB0"/>
<dbReference type="SMR" id="C0HJB0"/>
<dbReference type="TCDB" id="8.B.23.1.3">
    <property type="family name" value="the mambalgin (mambalgin) family"/>
</dbReference>
<dbReference type="GO" id="GO:0005576">
    <property type="term" value="C:extracellular region"/>
    <property type="evidence" value="ECO:0007669"/>
    <property type="project" value="UniProtKB-SubCell"/>
</dbReference>
<dbReference type="GO" id="GO:0099106">
    <property type="term" value="F:ion channel regulator activity"/>
    <property type="evidence" value="ECO:0007669"/>
    <property type="project" value="UniProtKB-KW"/>
</dbReference>
<dbReference type="GO" id="GO:0090729">
    <property type="term" value="F:toxin activity"/>
    <property type="evidence" value="ECO:0007669"/>
    <property type="project" value="UniProtKB-KW"/>
</dbReference>
<dbReference type="CDD" id="cd00206">
    <property type="entry name" value="TFP_snake_toxin"/>
    <property type="match status" value="1"/>
</dbReference>
<dbReference type="Gene3D" id="2.10.60.10">
    <property type="entry name" value="CD59"/>
    <property type="match status" value="1"/>
</dbReference>
<dbReference type="InterPro" id="IPR003571">
    <property type="entry name" value="Snake_3FTx"/>
</dbReference>
<dbReference type="InterPro" id="IPR045860">
    <property type="entry name" value="Snake_toxin-like_sf"/>
</dbReference>
<dbReference type="InterPro" id="IPR054131">
    <property type="entry name" value="Toxin_cobra-type"/>
</dbReference>
<dbReference type="Pfam" id="PF21947">
    <property type="entry name" value="Toxin_cobra-type"/>
    <property type="match status" value="1"/>
</dbReference>
<dbReference type="SUPFAM" id="SSF57302">
    <property type="entry name" value="Snake toxin-like"/>
    <property type="match status" value="1"/>
</dbReference>
<sequence length="57" mass="6575">LKCYQHGKVVTCHRDMKFCYHNIGMPFRNLKLILQGCSSSCSETENNKCCSTDRCNK</sequence>